<organism>
    <name type="scientific">Methanococcus maripaludis (strain C7 / ATCC BAA-1331)</name>
    <dbReference type="NCBI Taxonomy" id="426368"/>
    <lineage>
        <taxon>Archaea</taxon>
        <taxon>Methanobacteriati</taxon>
        <taxon>Methanobacteriota</taxon>
        <taxon>Methanomada group</taxon>
        <taxon>Methanococci</taxon>
        <taxon>Methanococcales</taxon>
        <taxon>Methanococcaceae</taxon>
        <taxon>Methanococcus</taxon>
    </lineage>
</organism>
<name>DAPA_METM7</name>
<accession>A6VJM9</accession>
<dbReference type="EC" id="4.3.3.7" evidence="1"/>
<dbReference type="EMBL" id="CP000745">
    <property type="protein sequence ID" value="ABR66655.1"/>
    <property type="molecule type" value="Genomic_DNA"/>
</dbReference>
<dbReference type="SMR" id="A6VJM9"/>
<dbReference type="STRING" id="426368.MmarC7_1597"/>
<dbReference type="KEGG" id="mmz:MmarC7_1597"/>
<dbReference type="eggNOG" id="arCOG04172">
    <property type="taxonomic scope" value="Archaea"/>
</dbReference>
<dbReference type="HOGENOM" id="CLU_049343_7_1_2"/>
<dbReference type="OrthoDB" id="33636at2157"/>
<dbReference type="UniPathway" id="UPA00034">
    <property type="reaction ID" value="UER00017"/>
</dbReference>
<dbReference type="GO" id="GO:0005737">
    <property type="term" value="C:cytoplasm"/>
    <property type="evidence" value="ECO:0007669"/>
    <property type="project" value="UniProtKB-SubCell"/>
</dbReference>
<dbReference type="GO" id="GO:0008675">
    <property type="term" value="F:2-dehydro-3-deoxy-phosphogluconate aldolase activity"/>
    <property type="evidence" value="ECO:0007669"/>
    <property type="project" value="UniProtKB-ARBA"/>
</dbReference>
<dbReference type="GO" id="GO:0008840">
    <property type="term" value="F:4-hydroxy-tetrahydrodipicolinate synthase activity"/>
    <property type="evidence" value="ECO:0007669"/>
    <property type="project" value="UniProtKB-UniRule"/>
</dbReference>
<dbReference type="GO" id="GO:0019877">
    <property type="term" value="P:diaminopimelate biosynthetic process"/>
    <property type="evidence" value="ECO:0007669"/>
    <property type="project" value="UniProtKB-UniRule"/>
</dbReference>
<dbReference type="GO" id="GO:0009089">
    <property type="term" value="P:lysine biosynthetic process via diaminopimelate"/>
    <property type="evidence" value="ECO:0007669"/>
    <property type="project" value="UniProtKB-UniRule"/>
</dbReference>
<dbReference type="CDD" id="cd00950">
    <property type="entry name" value="DHDPS"/>
    <property type="match status" value="1"/>
</dbReference>
<dbReference type="Gene3D" id="3.20.20.70">
    <property type="entry name" value="Aldolase class I"/>
    <property type="match status" value="1"/>
</dbReference>
<dbReference type="HAMAP" id="MF_00418">
    <property type="entry name" value="DapA"/>
    <property type="match status" value="1"/>
</dbReference>
<dbReference type="InterPro" id="IPR013785">
    <property type="entry name" value="Aldolase_TIM"/>
</dbReference>
<dbReference type="InterPro" id="IPR005263">
    <property type="entry name" value="DapA"/>
</dbReference>
<dbReference type="InterPro" id="IPR002220">
    <property type="entry name" value="DapA-like"/>
</dbReference>
<dbReference type="InterPro" id="IPR020625">
    <property type="entry name" value="Schiff_base-form_aldolases_AS"/>
</dbReference>
<dbReference type="InterPro" id="IPR020624">
    <property type="entry name" value="Schiff_base-form_aldolases_CS"/>
</dbReference>
<dbReference type="NCBIfam" id="TIGR00674">
    <property type="entry name" value="dapA"/>
    <property type="match status" value="1"/>
</dbReference>
<dbReference type="PANTHER" id="PTHR12128:SF66">
    <property type="entry name" value="4-HYDROXY-2-OXOGLUTARATE ALDOLASE, MITOCHONDRIAL"/>
    <property type="match status" value="1"/>
</dbReference>
<dbReference type="PANTHER" id="PTHR12128">
    <property type="entry name" value="DIHYDRODIPICOLINATE SYNTHASE"/>
    <property type="match status" value="1"/>
</dbReference>
<dbReference type="Pfam" id="PF00701">
    <property type="entry name" value="DHDPS"/>
    <property type="match status" value="1"/>
</dbReference>
<dbReference type="PIRSF" id="PIRSF001365">
    <property type="entry name" value="DHDPS"/>
    <property type="match status" value="1"/>
</dbReference>
<dbReference type="PRINTS" id="PR00146">
    <property type="entry name" value="DHPICSNTHASE"/>
</dbReference>
<dbReference type="SMART" id="SM01130">
    <property type="entry name" value="DHDPS"/>
    <property type="match status" value="1"/>
</dbReference>
<dbReference type="SUPFAM" id="SSF51569">
    <property type="entry name" value="Aldolase"/>
    <property type="match status" value="1"/>
</dbReference>
<dbReference type="PROSITE" id="PS00665">
    <property type="entry name" value="DHDPS_1"/>
    <property type="match status" value="1"/>
</dbReference>
<dbReference type="PROSITE" id="PS00666">
    <property type="entry name" value="DHDPS_2"/>
    <property type="match status" value="1"/>
</dbReference>
<sequence>MQGVYPAIITPFKDGKVDYDGLQSNLDFLIENGVSGVIPVGTTGESPTLTPLEHEQVIEKVVEFVDGRVEVIAGTGSNSTSEALEFSQYAEDVGVDGVLLITPYYNKPSQEGLKRHFGEIANSINVPIVLYNVPSRTALNIEPYTIKYLFEEYSNITAIKEANPNLSQVSEVLDSCNIDVLSGNDELTLPIISLGGKGVVSVVANIAPKEFVQMVDFANAGKFDKAKEIHYKLFPLMKLMFIETNPIPIKTAMNMLGMPSGELRLPLCEMAESNKSKLQNALNNLGLLK</sequence>
<proteinExistence type="inferred from homology"/>
<comment type="function">
    <text evidence="1">Catalyzes the condensation of (S)-aspartate-beta-semialdehyde [(S)-ASA] and pyruvate to 4-hydroxy-tetrahydrodipicolinate (HTPA).</text>
</comment>
<comment type="catalytic activity">
    <reaction evidence="1">
        <text>L-aspartate 4-semialdehyde + pyruvate = (2S,4S)-4-hydroxy-2,3,4,5-tetrahydrodipicolinate + H2O + H(+)</text>
        <dbReference type="Rhea" id="RHEA:34171"/>
        <dbReference type="ChEBI" id="CHEBI:15361"/>
        <dbReference type="ChEBI" id="CHEBI:15377"/>
        <dbReference type="ChEBI" id="CHEBI:15378"/>
        <dbReference type="ChEBI" id="CHEBI:67139"/>
        <dbReference type="ChEBI" id="CHEBI:537519"/>
        <dbReference type="EC" id="4.3.3.7"/>
    </reaction>
</comment>
<comment type="pathway">
    <text evidence="1">Amino-acid biosynthesis; L-lysine biosynthesis via DAP pathway; (S)-tetrahydrodipicolinate from L-aspartate: step 3/4.</text>
</comment>
<comment type="subunit">
    <text evidence="1">Homotetramer; dimer of dimers.</text>
</comment>
<comment type="subcellular location">
    <subcellularLocation>
        <location evidence="1">Cytoplasm</location>
    </subcellularLocation>
</comment>
<comment type="similarity">
    <text evidence="1">Belongs to the DapA family.</text>
</comment>
<comment type="caution">
    <text evidence="2">Was originally thought to be a dihydrodipicolinate synthase (DHDPS), catalyzing the condensation of (S)-aspartate-beta-semialdehyde [(S)-ASA] and pyruvate to dihydrodipicolinate (DHDP). However, it was shown in E.coli that the product of the enzymatic reaction is not dihydrodipicolinate but in fact (4S)-4-hydroxy-2,3,4,5-tetrahydro-(2S)-dipicolinic acid (HTPA), and that the consecutive dehydration reaction leading to DHDP is not spontaneous but catalyzed by DapB.</text>
</comment>
<feature type="chain" id="PRO_1000050219" description="4-hydroxy-tetrahydrodipicolinate synthase">
    <location>
        <begin position="1"/>
        <end position="289"/>
    </location>
</feature>
<feature type="active site" description="Proton donor/acceptor" evidence="1">
    <location>
        <position position="131"/>
    </location>
</feature>
<feature type="active site" description="Schiff-base intermediate with substrate" evidence="1">
    <location>
        <position position="160"/>
    </location>
</feature>
<feature type="binding site" evidence="1">
    <location>
        <position position="43"/>
    </location>
    <ligand>
        <name>pyruvate</name>
        <dbReference type="ChEBI" id="CHEBI:15361"/>
    </ligand>
</feature>
<feature type="binding site" evidence="1">
    <location>
        <position position="200"/>
    </location>
    <ligand>
        <name>pyruvate</name>
        <dbReference type="ChEBI" id="CHEBI:15361"/>
    </ligand>
</feature>
<feature type="site" description="Part of a proton relay during catalysis" evidence="1">
    <location>
        <position position="42"/>
    </location>
</feature>
<feature type="site" description="Part of a proton relay during catalysis" evidence="1">
    <location>
        <position position="105"/>
    </location>
</feature>
<gene>
    <name evidence="1" type="primary">dapA</name>
    <name type="ordered locus">MmarC7_1597</name>
</gene>
<protein>
    <recommendedName>
        <fullName evidence="1">4-hydroxy-tetrahydrodipicolinate synthase</fullName>
        <shortName evidence="1">HTPA synthase</shortName>
        <ecNumber evidence="1">4.3.3.7</ecNumber>
    </recommendedName>
</protein>
<reference key="1">
    <citation type="submission" date="2007-06" db="EMBL/GenBank/DDBJ databases">
        <title>Complete sequence of Methanococcus maripaludis C7.</title>
        <authorList>
            <consortium name="US DOE Joint Genome Institute"/>
            <person name="Copeland A."/>
            <person name="Lucas S."/>
            <person name="Lapidus A."/>
            <person name="Barry K."/>
            <person name="Glavina del Rio T."/>
            <person name="Dalin E."/>
            <person name="Tice H."/>
            <person name="Pitluck S."/>
            <person name="Clum A."/>
            <person name="Schmutz J."/>
            <person name="Larimer F."/>
            <person name="Land M."/>
            <person name="Hauser L."/>
            <person name="Kyrpides N."/>
            <person name="Anderson I."/>
            <person name="Sieprawska-Lupa M."/>
            <person name="Whitman W.B."/>
            <person name="Richardson P."/>
        </authorList>
    </citation>
    <scope>NUCLEOTIDE SEQUENCE [LARGE SCALE GENOMIC DNA]</scope>
    <source>
        <strain>C7 / ATCC BAA-1331</strain>
    </source>
</reference>
<keyword id="KW-0028">Amino-acid biosynthesis</keyword>
<keyword id="KW-0963">Cytoplasm</keyword>
<keyword id="KW-0220">Diaminopimelate biosynthesis</keyword>
<keyword id="KW-0456">Lyase</keyword>
<keyword id="KW-0457">Lysine biosynthesis</keyword>
<keyword id="KW-0704">Schiff base</keyword>
<evidence type="ECO:0000255" key="1">
    <source>
        <dbReference type="HAMAP-Rule" id="MF_00418"/>
    </source>
</evidence>
<evidence type="ECO:0000305" key="2"/>